<sequence length="114" mass="13167">MQQLIAEITKGQLKTDLPSFRPGDTLRVHVKVVEGTRERIQLFEGVVIKRRGGGISETFTVRKISYGVGVERTFPVHTPRIAKIEVLRRGKVRRAKLYYLRNLRGKKARIKEIR</sequence>
<evidence type="ECO:0000255" key="1">
    <source>
        <dbReference type="HAMAP-Rule" id="MF_00402"/>
    </source>
</evidence>
<evidence type="ECO:0000305" key="2"/>
<organism>
    <name type="scientific">Bacillus anthracis (strain A0248)</name>
    <dbReference type="NCBI Taxonomy" id="592021"/>
    <lineage>
        <taxon>Bacteria</taxon>
        <taxon>Bacillati</taxon>
        <taxon>Bacillota</taxon>
        <taxon>Bacilli</taxon>
        <taxon>Bacillales</taxon>
        <taxon>Bacillaceae</taxon>
        <taxon>Bacillus</taxon>
        <taxon>Bacillus cereus group</taxon>
    </lineage>
</organism>
<dbReference type="EMBL" id="CP001598">
    <property type="protein sequence ID" value="ACQ50742.1"/>
    <property type="molecule type" value="Genomic_DNA"/>
</dbReference>
<dbReference type="RefSeq" id="WP_001186516.1">
    <property type="nucleotide sequence ID" value="NC_012659.1"/>
</dbReference>
<dbReference type="SMR" id="C3P5P1"/>
<dbReference type="GeneID" id="93007272"/>
<dbReference type="KEGG" id="bai:BAA_4001"/>
<dbReference type="HOGENOM" id="CLU_103507_2_1_9"/>
<dbReference type="GO" id="GO:0022625">
    <property type="term" value="C:cytosolic large ribosomal subunit"/>
    <property type="evidence" value="ECO:0007669"/>
    <property type="project" value="TreeGrafter"/>
</dbReference>
<dbReference type="GO" id="GO:0003735">
    <property type="term" value="F:structural constituent of ribosome"/>
    <property type="evidence" value="ECO:0007669"/>
    <property type="project" value="InterPro"/>
</dbReference>
<dbReference type="GO" id="GO:0006412">
    <property type="term" value="P:translation"/>
    <property type="evidence" value="ECO:0007669"/>
    <property type="project" value="UniProtKB-UniRule"/>
</dbReference>
<dbReference type="FunFam" id="2.30.30.790:FF:000001">
    <property type="entry name" value="50S ribosomal protein L19"/>
    <property type="match status" value="1"/>
</dbReference>
<dbReference type="Gene3D" id="2.30.30.790">
    <property type="match status" value="1"/>
</dbReference>
<dbReference type="HAMAP" id="MF_00402">
    <property type="entry name" value="Ribosomal_bL19"/>
    <property type="match status" value="1"/>
</dbReference>
<dbReference type="InterPro" id="IPR001857">
    <property type="entry name" value="Ribosomal_bL19"/>
</dbReference>
<dbReference type="InterPro" id="IPR018257">
    <property type="entry name" value="Ribosomal_bL19_CS"/>
</dbReference>
<dbReference type="InterPro" id="IPR038657">
    <property type="entry name" value="Ribosomal_bL19_sf"/>
</dbReference>
<dbReference type="InterPro" id="IPR008991">
    <property type="entry name" value="Translation_prot_SH3-like_sf"/>
</dbReference>
<dbReference type="NCBIfam" id="TIGR01024">
    <property type="entry name" value="rplS_bact"/>
    <property type="match status" value="1"/>
</dbReference>
<dbReference type="PANTHER" id="PTHR15680:SF9">
    <property type="entry name" value="LARGE RIBOSOMAL SUBUNIT PROTEIN BL19M"/>
    <property type="match status" value="1"/>
</dbReference>
<dbReference type="PANTHER" id="PTHR15680">
    <property type="entry name" value="RIBOSOMAL PROTEIN L19"/>
    <property type="match status" value="1"/>
</dbReference>
<dbReference type="Pfam" id="PF01245">
    <property type="entry name" value="Ribosomal_L19"/>
    <property type="match status" value="1"/>
</dbReference>
<dbReference type="PIRSF" id="PIRSF002191">
    <property type="entry name" value="Ribosomal_L19"/>
    <property type="match status" value="1"/>
</dbReference>
<dbReference type="PRINTS" id="PR00061">
    <property type="entry name" value="RIBOSOMALL19"/>
</dbReference>
<dbReference type="SUPFAM" id="SSF50104">
    <property type="entry name" value="Translation proteins SH3-like domain"/>
    <property type="match status" value="1"/>
</dbReference>
<dbReference type="PROSITE" id="PS01015">
    <property type="entry name" value="RIBOSOMAL_L19"/>
    <property type="match status" value="1"/>
</dbReference>
<reference key="1">
    <citation type="submission" date="2009-04" db="EMBL/GenBank/DDBJ databases">
        <title>Genome sequence of Bacillus anthracis A0248.</title>
        <authorList>
            <person name="Dodson R.J."/>
            <person name="Munk A.C."/>
            <person name="Bruce D."/>
            <person name="Detter C."/>
            <person name="Tapia R."/>
            <person name="Sutton G."/>
            <person name="Sims D."/>
            <person name="Brettin T."/>
        </authorList>
    </citation>
    <scope>NUCLEOTIDE SEQUENCE [LARGE SCALE GENOMIC DNA]</scope>
    <source>
        <strain>A0248</strain>
    </source>
</reference>
<feature type="chain" id="PRO_1000134553" description="Large ribosomal subunit protein bL19">
    <location>
        <begin position="1"/>
        <end position="114"/>
    </location>
</feature>
<comment type="function">
    <text evidence="1">This protein is located at the 30S-50S ribosomal subunit interface and may play a role in the structure and function of the aminoacyl-tRNA binding site.</text>
</comment>
<comment type="similarity">
    <text evidence="1">Belongs to the bacterial ribosomal protein bL19 family.</text>
</comment>
<proteinExistence type="inferred from homology"/>
<accession>C3P5P1</accession>
<gene>
    <name evidence="1" type="primary">rplS</name>
    <name type="ordered locus">BAA_4001</name>
</gene>
<keyword id="KW-0687">Ribonucleoprotein</keyword>
<keyword id="KW-0689">Ribosomal protein</keyword>
<protein>
    <recommendedName>
        <fullName evidence="1">Large ribosomal subunit protein bL19</fullName>
    </recommendedName>
    <alternativeName>
        <fullName evidence="2">50S ribosomal protein L19</fullName>
    </alternativeName>
</protein>
<name>RL19_BACAA</name>